<comment type="function">
    <text evidence="1">Catalyzes the ATP-dependent biosynthesis of glutamine from glutamate and ammonia.</text>
</comment>
<comment type="catalytic activity">
    <reaction evidence="1">
        <text>L-glutamate + NH4(+) + ATP = L-glutamine + ADP + phosphate + H(+)</text>
        <dbReference type="Rhea" id="RHEA:16169"/>
        <dbReference type="ChEBI" id="CHEBI:15378"/>
        <dbReference type="ChEBI" id="CHEBI:28938"/>
        <dbReference type="ChEBI" id="CHEBI:29985"/>
        <dbReference type="ChEBI" id="CHEBI:30616"/>
        <dbReference type="ChEBI" id="CHEBI:43474"/>
        <dbReference type="ChEBI" id="CHEBI:58359"/>
        <dbReference type="ChEBI" id="CHEBI:456216"/>
        <dbReference type="EC" id="6.3.1.2"/>
    </reaction>
</comment>
<comment type="cofactor">
    <cofactor evidence="4">
        <name>Mg(2+)</name>
        <dbReference type="ChEBI" id="CHEBI:18420"/>
    </cofactor>
    <text evidence="4">Binds 2 Mg(2+) ions per subunit.</text>
</comment>
<comment type="activity regulation">
    <text evidence="5">The activity of this enzyme could be controlled by adenylation under conditions of abundant glutamine.</text>
</comment>
<comment type="subunit">
    <text evidence="1">Oligomer of 12 subunits arranged in the form of two hexameric ring.</text>
</comment>
<comment type="subcellular location">
    <subcellularLocation>
        <location evidence="4">Cytoplasm</location>
    </subcellularLocation>
</comment>
<comment type="similarity">
    <text evidence="8">Belongs to the glutamine synthetase family.</text>
</comment>
<protein>
    <recommendedName>
        <fullName evidence="1">Glutamine synthetase</fullName>
        <shortName evidence="1">GS</shortName>
        <ecNumber evidence="1">6.3.1.2</ecNumber>
    </recommendedName>
    <alternativeName>
        <fullName evidence="8">Glutamate--ammonia ligase</fullName>
    </alternativeName>
    <alternativeName>
        <fullName evidence="1">Glutamine synthetase I beta</fullName>
        <shortName evidence="1">GSI beta</shortName>
    </alternativeName>
</protein>
<sequence>MATASEILKQIKENDVKFVDLRFTDRRASLQHVTMDVVCVDEDMFADGVMFDGFSIGGWKAINESDMVLMPDTETVHMDPFFAQSTMVIVCDILDPVSGEAYNRDRRGTAKKAEAYLKASGIGDTVFVGREAEFFVFDDVKYKADPYNTGFKLDSTELPSNDDTDYETGNLGHRPRVKGGYFPVPPVDSAQDMRSEMLTVLSEMGVVVEKHHHEVAAAQHDTLVRNADELGIKFKMQIYKYVVHQVANAYGKTATFMPKPIFGDNGSGMHVHQSIWKGGKPTFAGDEYAGLSESCLFYIGGIIKHAKAINAFTNPSTNSYKRFVPGYEAPVLLAYSARNRSASCRIPFGSNPKAKRVEVRFPDPTANPYLAFAAMLMAGLDGIKNKIHPGKAMDKDLYDLPPKELKKIPTVCGSLRQALESLDKDRKFLTAGGVFDDDQIDAFIELKMAEVMRFEMTPHPVEYDMYYSA</sequence>
<reference key="1">
    <citation type="journal article" date="1987" name="Nucleic Acids Res.">
        <title>Tight linkage of glnA and a putative regulatory gene in Rhizobium leguminosarum.</title>
        <authorList>
            <person name="Colonna-Romano S."/>
            <person name="Riccio A."/>
            <person name="Guida M."/>
            <person name="Defez R."/>
            <person name="Lamberti A."/>
            <person name="Iaccarino M."/>
            <person name="Arnold W."/>
            <person name="Priefer U."/>
            <person name="Puehler A."/>
        </authorList>
    </citation>
    <scope>NUCLEOTIDE SEQUENCE [GENOMIC DNA]</scope>
    <source>
        <strain>RCC1001</strain>
    </source>
</reference>
<feature type="chain" id="PRO_0000153223" description="Glutamine synthetase">
    <location>
        <begin position="1"/>
        <end position="469"/>
    </location>
</feature>
<feature type="domain" description="GS beta-grasp" evidence="6">
    <location>
        <begin position="14"/>
        <end position="99"/>
    </location>
</feature>
<feature type="domain" description="GS catalytic" evidence="7">
    <location>
        <begin position="106"/>
        <end position="469"/>
    </location>
</feature>
<feature type="binding site" evidence="4">
    <location>
        <position position="131"/>
    </location>
    <ligand>
        <name>Mg(2+)</name>
        <dbReference type="ChEBI" id="CHEBI:18420"/>
        <label>1</label>
    </ligand>
</feature>
<feature type="binding site" evidence="4">
    <location>
        <position position="133"/>
    </location>
    <ligand>
        <name>Mg(2+)</name>
        <dbReference type="ChEBI" id="CHEBI:18420"/>
        <label>2</label>
    </ligand>
</feature>
<feature type="binding site" evidence="1">
    <location>
        <position position="209"/>
    </location>
    <ligand>
        <name>ATP</name>
        <dbReference type="ChEBI" id="CHEBI:30616"/>
    </ligand>
</feature>
<feature type="binding site" evidence="4">
    <location>
        <position position="214"/>
    </location>
    <ligand>
        <name>Mg(2+)</name>
        <dbReference type="ChEBI" id="CHEBI:18420"/>
        <label>2</label>
    </ligand>
</feature>
<feature type="binding site" evidence="4">
    <location>
        <position position="221"/>
    </location>
    <ligand>
        <name>Mg(2+)</name>
        <dbReference type="ChEBI" id="CHEBI:18420"/>
        <label>2</label>
    </ligand>
</feature>
<feature type="binding site" evidence="1">
    <location>
        <begin position="265"/>
        <end position="266"/>
    </location>
    <ligand>
        <name>L-glutamate</name>
        <dbReference type="ChEBI" id="CHEBI:29985"/>
    </ligand>
</feature>
<feature type="binding site" evidence="2">
    <location>
        <position position="266"/>
    </location>
    <ligand>
        <name>L-glutamate</name>
        <dbReference type="ChEBI" id="CHEBI:29985"/>
    </ligand>
</feature>
<feature type="binding site" evidence="4">
    <location>
        <position position="270"/>
    </location>
    <ligand>
        <name>Mg(2+)</name>
        <dbReference type="ChEBI" id="CHEBI:18420"/>
        <label>1</label>
    </ligand>
</feature>
<feature type="binding site" evidence="1">
    <location>
        <begin position="272"/>
        <end position="274"/>
    </location>
    <ligand>
        <name>ATP</name>
        <dbReference type="ChEBI" id="CHEBI:30616"/>
    </ligand>
</feature>
<feature type="binding site" evidence="3">
    <location>
        <position position="274"/>
    </location>
    <ligand>
        <name>ATP</name>
        <dbReference type="ChEBI" id="CHEBI:30616"/>
    </ligand>
</feature>
<feature type="binding site" evidence="1">
    <location>
        <position position="322"/>
    </location>
    <ligand>
        <name>L-glutamate</name>
        <dbReference type="ChEBI" id="CHEBI:29985"/>
    </ligand>
</feature>
<feature type="binding site" evidence="1">
    <location>
        <position position="328"/>
    </location>
    <ligand>
        <name>L-glutamate</name>
        <dbReference type="ChEBI" id="CHEBI:29985"/>
    </ligand>
</feature>
<feature type="binding site" evidence="4">
    <location>
        <position position="340"/>
    </location>
    <ligand>
        <name>ATP</name>
        <dbReference type="ChEBI" id="CHEBI:30616"/>
    </ligand>
</feature>
<feature type="binding site" evidence="4">
    <location>
        <position position="340"/>
    </location>
    <ligand>
        <name>L-glutamate</name>
        <dbReference type="ChEBI" id="CHEBI:29985"/>
    </ligand>
</feature>
<feature type="binding site" evidence="4">
    <location>
        <position position="345"/>
    </location>
    <ligand>
        <name>ATP</name>
        <dbReference type="ChEBI" id="CHEBI:30616"/>
    </ligand>
</feature>
<feature type="binding site" evidence="3">
    <location>
        <position position="353"/>
    </location>
    <ligand>
        <name>ATP</name>
        <dbReference type="ChEBI" id="CHEBI:30616"/>
    </ligand>
</feature>
<feature type="binding site" evidence="4">
    <location>
        <position position="358"/>
    </location>
    <ligand>
        <name>Mg(2+)</name>
        <dbReference type="ChEBI" id="CHEBI:18420"/>
        <label>1</label>
    </ligand>
</feature>
<feature type="binding site" evidence="1">
    <location>
        <position position="360"/>
    </location>
    <ligand>
        <name>L-glutamate</name>
        <dbReference type="ChEBI" id="CHEBI:29985"/>
    </ligand>
</feature>
<feature type="modified residue" description="O-AMP-tyrosine" evidence="4">
    <location>
        <position position="398"/>
    </location>
</feature>
<dbReference type="EC" id="6.3.1.2" evidence="1"/>
<dbReference type="EMBL" id="X04880">
    <property type="protein sequence ID" value="CAA28569.1"/>
    <property type="molecule type" value="Genomic_DNA"/>
</dbReference>
<dbReference type="PIR" id="A26567">
    <property type="entry name" value="AJZRQL"/>
</dbReference>
<dbReference type="SMR" id="P09826"/>
<dbReference type="GO" id="GO:0005737">
    <property type="term" value="C:cytoplasm"/>
    <property type="evidence" value="ECO:0007669"/>
    <property type="project" value="UniProtKB-SubCell"/>
</dbReference>
<dbReference type="GO" id="GO:0016020">
    <property type="term" value="C:membrane"/>
    <property type="evidence" value="ECO:0007669"/>
    <property type="project" value="TreeGrafter"/>
</dbReference>
<dbReference type="GO" id="GO:0005524">
    <property type="term" value="F:ATP binding"/>
    <property type="evidence" value="ECO:0007669"/>
    <property type="project" value="UniProtKB-KW"/>
</dbReference>
<dbReference type="GO" id="GO:0004356">
    <property type="term" value="F:glutamine synthetase activity"/>
    <property type="evidence" value="ECO:0007669"/>
    <property type="project" value="UniProtKB-EC"/>
</dbReference>
<dbReference type="GO" id="GO:0046872">
    <property type="term" value="F:metal ion binding"/>
    <property type="evidence" value="ECO:0007669"/>
    <property type="project" value="UniProtKB-KW"/>
</dbReference>
<dbReference type="GO" id="GO:0006542">
    <property type="term" value="P:glutamine biosynthetic process"/>
    <property type="evidence" value="ECO:0007669"/>
    <property type="project" value="InterPro"/>
</dbReference>
<dbReference type="GO" id="GO:0009399">
    <property type="term" value="P:nitrogen fixation"/>
    <property type="evidence" value="ECO:0007669"/>
    <property type="project" value="UniProtKB-KW"/>
</dbReference>
<dbReference type="GO" id="GO:0019740">
    <property type="term" value="P:nitrogen utilization"/>
    <property type="evidence" value="ECO:0007669"/>
    <property type="project" value="TreeGrafter"/>
</dbReference>
<dbReference type="FunFam" id="3.30.590.10:FF:000001">
    <property type="entry name" value="Glutamine synthetase"/>
    <property type="match status" value="1"/>
</dbReference>
<dbReference type="Gene3D" id="3.10.20.70">
    <property type="entry name" value="Glutamine synthetase, N-terminal domain"/>
    <property type="match status" value="1"/>
</dbReference>
<dbReference type="Gene3D" id="3.30.590.10">
    <property type="entry name" value="Glutamine synthetase/guanido kinase, catalytic domain"/>
    <property type="match status" value="1"/>
</dbReference>
<dbReference type="InterPro" id="IPR008147">
    <property type="entry name" value="Gln_synt_N"/>
</dbReference>
<dbReference type="InterPro" id="IPR036651">
    <property type="entry name" value="Gln_synt_N_sf"/>
</dbReference>
<dbReference type="InterPro" id="IPR014746">
    <property type="entry name" value="Gln_synth/guanido_kin_cat_dom"/>
</dbReference>
<dbReference type="InterPro" id="IPR008146">
    <property type="entry name" value="Gln_synth_cat_dom"/>
</dbReference>
<dbReference type="InterPro" id="IPR027303">
    <property type="entry name" value="Gln_synth_gly_rich_site"/>
</dbReference>
<dbReference type="InterPro" id="IPR004809">
    <property type="entry name" value="Gln_synth_I"/>
</dbReference>
<dbReference type="InterPro" id="IPR001637">
    <property type="entry name" value="Gln_synth_I_adenylation_site"/>
</dbReference>
<dbReference type="NCBIfam" id="TIGR00653">
    <property type="entry name" value="GlnA"/>
    <property type="match status" value="1"/>
</dbReference>
<dbReference type="PANTHER" id="PTHR43407">
    <property type="entry name" value="GLUTAMINE SYNTHETASE"/>
    <property type="match status" value="1"/>
</dbReference>
<dbReference type="PANTHER" id="PTHR43407:SF2">
    <property type="entry name" value="GLUTAMINE SYNTHETASE"/>
    <property type="match status" value="1"/>
</dbReference>
<dbReference type="Pfam" id="PF00120">
    <property type="entry name" value="Gln-synt_C"/>
    <property type="match status" value="1"/>
</dbReference>
<dbReference type="Pfam" id="PF03951">
    <property type="entry name" value="Gln-synt_N"/>
    <property type="match status" value="1"/>
</dbReference>
<dbReference type="SMART" id="SM01230">
    <property type="entry name" value="Gln-synt_C"/>
    <property type="match status" value="1"/>
</dbReference>
<dbReference type="SUPFAM" id="SSF54368">
    <property type="entry name" value="Glutamine synthetase, N-terminal domain"/>
    <property type="match status" value="1"/>
</dbReference>
<dbReference type="SUPFAM" id="SSF55931">
    <property type="entry name" value="Glutamine synthetase/guanido kinase"/>
    <property type="match status" value="1"/>
</dbReference>
<dbReference type="PROSITE" id="PS00182">
    <property type="entry name" value="GLNA_ADENYLATION"/>
    <property type="match status" value="1"/>
</dbReference>
<dbReference type="PROSITE" id="PS00181">
    <property type="entry name" value="GLNA_ATP"/>
    <property type="match status" value="1"/>
</dbReference>
<dbReference type="PROSITE" id="PS51986">
    <property type="entry name" value="GS_BETA_GRASP"/>
    <property type="match status" value="1"/>
</dbReference>
<dbReference type="PROSITE" id="PS51987">
    <property type="entry name" value="GS_CATALYTIC"/>
    <property type="match status" value="1"/>
</dbReference>
<name>GLN1B_RHILV</name>
<gene>
    <name evidence="1" type="primary">glnA</name>
</gene>
<organism>
    <name type="scientific">Rhizobium leguminosarum bv. viciae</name>
    <dbReference type="NCBI Taxonomy" id="387"/>
    <lineage>
        <taxon>Bacteria</taxon>
        <taxon>Pseudomonadati</taxon>
        <taxon>Pseudomonadota</taxon>
        <taxon>Alphaproteobacteria</taxon>
        <taxon>Hyphomicrobiales</taxon>
        <taxon>Rhizobiaceae</taxon>
        <taxon>Rhizobium/Agrobacterium group</taxon>
        <taxon>Rhizobium</taxon>
    </lineage>
</organism>
<keyword id="KW-0067">ATP-binding</keyword>
<keyword id="KW-0963">Cytoplasm</keyword>
<keyword id="KW-0436">Ligase</keyword>
<keyword id="KW-0460">Magnesium</keyword>
<keyword id="KW-0479">Metal-binding</keyword>
<keyword id="KW-0535">Nitrogen fixation</keyword>
<keyword id="KW-0547">Nucleotide-binding</keyword>
<keyword id="KW-0597">Phosphoprotein</keyword>
<accession>P09826</accession>
<proteinExistence type="inferred from homology"/>
<evidence type="ECO:0000250" key="1">
    <source>
        <dbReference type="UniProtKB" id="P0A1P6"/>
    </source>
</evidence>
<evidence type="ECO:0000250" key="2">
    <source>
        <dbReference type="UniProtKB" id="P12425"/>
    </source>
</evidence>
<evidence type="ECO:0000250" key="3">
    <source>
        <dbReference type="UniProtKB" id="P77961"/>
    </source>
</evidence>
<evidence type="ECO:0000250" key="4">
    <source>
        <dbReference type="UniProtKB" id="P9WN39"/>
    </source>
</evidence>
<evidence type="ECO:0000250" key="5">
    <source>
        <dbReference type="UniProtKB" id="Q3V5W6"/>
    </source>
</evidence>
<evidence type="ECO:0000255" key="6">
    <source>
        <dbReference type="PROSITE-ProRule" id="PRU01330"/>
    </source>
</evidence>
<evidence type="ECO:0000255" key="7">
    <source>
        <dbReference type="PROSITE-ProRule" id="PRU01331"/>
    </source>
</evidence>
<evidence type="ECO:0000305" key="8"/>